<accession>Q9LSS3</accession>
<accession>Q3E887</accession>
<feature type="chain" id="PRO_0000109457" description="tRNA-splicing endonuclease subunit Sen2-2">
    <location>
        <begin position="1"/>
        <end position="250"/>
    </location>
</feature>
<feature type="region of interest" description="Disordered" evidence="2">
    <location>
        <begin position="225"/>
        <end position="250"/>
    </location>
</feature>
<feature type="compositionally biased region" description="Polar residues" evidence="2">
    <location>
        <begin position="234"/>
        <end position="250"/>
    </location>
</feature>
<feature type="active site" evidence="1">
    <location>
        <position position="148"/>
    </location>
</feature>
<feature type="active site" evidence="1">
    <location>
        <position position="156"/>
    </location>
</feature>
<feature type="active site" evidence="1">
    <location>
        <position position="189"/>
    </location>
</feature>
<proteinExistence type="evidence at transcript level"/>
<sequence>MAPRWKWKGAEAKALAEPISKSVSELQLSLAETESSGTLSSCNVLLAVEPEQAELLDRCCFGRLVLSAEKIKKWIQLSFEEAFFLHYNLKCIKISLQGRCLENEVDTWLYMKSKRPNFPMFFKAYSHLRSKNWVLRSGLQYGVDFVAYRHHPSLVHSEYSVLVQSGDSDRLRVWSDIHCAVRLSGSVAKTLLTLYVNGNFKGEDVNLLVCLENFTVEEQTISRWSPELSREDQSTNSKQHVPNVSNLNTL</sequence>
<dbReference type="EC" id="4.6.1.16"/>
<dbReference type="EMBL" id="AB026632">
    <property type="protein sequence ID" value="BAA97504.1"/>
    <property type="molecule type" value="Genomic_DNA"/>
</dbReference>
<dbReference type="EMBL" id="CP002688">
    <property type="protein sequence ID" value="AED97296.1"/>
    <property type="molecule type" value="Genomic_DNA"/>
</dbReference>
<dbReference type="EMBL" id="BT004112">
    <property type="protein sequence ID" value="AAO42135.1"/>
    <property type="molecule type" value="mRNA"/>
</dbReference>
<dbReference type="EMBL" id="BT004920">
    <property type="protein sequence ID" value="AAO50453.1"/>
    <property type="molecule type" value="mRNA"/>
</dbReference>
<dbReference type="RefSeq" id="NP_200831.1">
    <molecule id="Q9LSS3-1"/>
    <property type="nucleotide sequence ID" value="NM_125416.4"/>
</dbReference>
<dbReference type="SMR" id="Q9LSS3"/>
<dbReference type="FunCoup" id="Q9LSS3">
    <property type="interactions" value="4"/>
</dbReference>
<dbReference type="STRING" id="3702.Q9LSS3"/>
<dbReference type="PaxDb" id="3702-AT5G60230.2"/>
<dbReference type="ProteomicsDB" id="232876">
    <molecule id="Q9LSS3-1"/>
</dbReference>
<dbReference type="EnsemblPlants" id="AT5G60230.1">
    <molecule id="Q9LSS3-1"/>
    <property type="protein sequence ID" value="AT5G60230.1"/>
    <property type="gene ID" value="AT5G60230"/>
</dbReference>
<dbReference type="GeneID" id="836145"/>
<dbReference type="Gramene" id="AT5G60230.1">
    <molecule id="Q9LSS3-1"/>
    <property type="protein sequence ID" value="AT5G60230.1"/>
    <property type="gene ID" value="AT5G60230"/>
</dbReference>
<dbReference type="KEGG" id="ath:AT5G60230"/>
<dbReference type="Araport" id="AT5G60230"/>
<dbReference type="TAIR" id="AT5G60230">
    <property type="gene designation" value="SEN2"/>
</dbReference>
<dbReference type="eggNOG" id="KOG4685">
    <property type="taxonomic scope" value="Eukaryota"/>
</dbReference>
<dbReference type="HOGENOM" id="CLU_053228_0_0_1"/>
<dbReference type="InParanoid" id="Q9LSS3"/>
<dbReference type="PhylomeDB" id="Q9LSS3"/>
<dbReference type="PRO" id="PR:Q9LSS3"/>
<dbReference type="Proteomes" id="UP000006548">
    <property type="component" value="Chromosome 5"/>
</dbReference>
<dbReference type="ExpressionAtlas" id="Q9LSS3">
    <property type="expression patterns" value="baseline and differential"/>
</dbReference>
<dbReference type="GO" id="GO:0005634">
    <property type="term" value="C:nucleus"/>
    <property type="evidence" value="ECO:0007669"/>
    <property type="project" value="UniProtKB-SubCell"/>
</dbReference>
<dbReference type="GO" id="GO:0016829">
    <property type="term" value="F:lyase activity"/>
    <property type="evidence" value="ECO:0007669"/>
    <property type="project" value="UniProtKB-KW"/>
</dbReference>
<dbReference type="GO" id="GO:0003676">
    <property type="term" value="F:nucleic acid binding"/>
    <property type="evidence" value="ECO:0007669"/>
    <property type="project" value="InterPro"/>
</dbReference>
<dbReference type="GO" id="GO:0000213">
    <property type="term" value="F:tRNA-intron endonuclease activity"/>
    <property type="evidence" value="ECO:0007669"/>
    <property type="project" value="UniProtKB-EC"/>
</dbReference>
<dbReference type="GO" id="GO:0006397">
    <property type="term" value="P:mRNA processing"/>
    <property type="evidence" value="ECO:0007669"/>
    <property type="project" value="UniProtKB-KW"/>
</dbReference>
<dbReference type="GO" id="GO:0006388">
    <property type="term" value="P:tRNA splicing, via endonucleolytic cleavage and ligation"/>
    <property type="evidence" value="ECO:0007669"/>
    <property type="project" value="InterPro"/>
</dbReference>
<dbReference type="CDD" id="cd22363">
    <property type="entry name" value="tRNA-intron_lyase_C"/>
    <property type="match status" value="1"/>
</dbReference>
<dbReference type="Gene3D" id="3.40.1350.10">
    <property type="match status" value="1"/>
</dbReference>
<dbReference type="InterPro" id="IPR011856">
    <property type="entry name" value="tRNA_endonuc-like_dom_sf"/>
</dbReference>
<dbReference type="InterPro" id="IPR036167">
    <property type="entry name" value="tRNA_intron_Endo_cat-like_sf"/>
</dbReference>
<dbReference type="InterPro" id="IPR006677">
    <property type="entry name" value="tRNA_intron_Endonuc_cat-like"/>
</dbReference>
<dbReference type="InterPro" id="IPR006678">
    <property type="entry name" value="tRNA_intron_Endonuc_N"/>
</dbReference>
<dbReference type="InterPro" id="IPR006676">
    <property type="entry name" value="tRNA_splic"/>
</dbReference>
<dbReference type="PANTHER" id="PTHR21227">
    <property type="entry name" value="TRNA-SPLICING ENDONUCLEASE SUBUNIT SEN2"/>
    <property type="match status" value="1"/>
</dbReference>
<dbReference type="PANTHER" id="PTHR21227:SF0">
    <property type="entry name" value="TRNA-SPLICING ENDONUCLEASE SUBUNIT SEN2"/>
    <property type="match status" value="1"/>
</dbReference>
<dbReference type="Pfam" id="PF01974">
    <property type="entry name" value="tRNA_int_endo"/>
    <property type="match status" value="1"/>
</dbReference>
<dbReference type="Pfam" id="PF02778">
    <property type="entry name" value="tRNA_int_endo_N"/>
    <property type="match status" value="1"/>
</dbReference>
<dbReference type="SUPFAM" id="SSF53032">
    <property type="entry name" value="tRNA-intron endonuclease catalytic domain-like"/>
    <property type="match status" value="1"/>
</dbReference>
<gene>
    <name type="primary">SEN2</name>
    <name type="ordered locus">At5g60230</name>
    <name type="ORF">F15L12.18</name>
</gene>
<name>SEN22_ARATH</name>
<organism>
    <name type="scientific">Arabidopsis thaliana</name>
    <name type="common">Mouse-ear cress</name>
    <dbReference type="NCBI Taxonomy" id="3702"/>
    <lineage>
        <taxon>Eukaryota</taxon>
        <taxon>Viridiplantae</taxon>
        <taxon>Streptophyta</taxon>
        <taxon>Embryophyta</taxon>
        <taxon>Tracheophyta</taxon>
        <taxon>Spermatophyta</taxon>
        <taxon>Magnoliopsida</taxon>
        <taxon>eudicotyledons</taxon>
        <taxon>Gunneridae</taxon>
        <taxon>Pentapetalae</taxon>
        <taxon>rosids</taxon>
        <taxon>malvids</taxon>
        <taxon>Brassicales</taxon>
        <taxon>Brassicaceae</taxon>
        <taxon>Camelineae</taxon>
        <taxon>Arabidopsis</taxon>
    </lineage>
</organism>
<evidence type="ECO:0000250" key="1"/>
<evidence type="ECO:0000256" key="2">
    <source>
        <dbReference type="SAM" id="MobiDB-lite"/>
    </source>
</evidence>
<evidence type="ECO:0000305" key="3"/>
<keyword id="KW-0025">Alternative splicing</keyword>
<keyword id="KW-0456">Lyase</keyword>
<keyword id="KW-0507">mRNA processing</keyword>
<keyword id="KW-0539">Nucleus</keyword>
<keyword id="KW-1185">Reference proteome</keyword>
<keyword id="KW-0819">tRNA processing</keyword>
<reference key="1">
    <citation type="journal article" date="2000" name="Gene">
        <title>Identification of two catalytic subunits of tRNA splicing endonuclease from Arabidopsis thaliana.</title>
        <authorList>
            <person name="Akama K."/>
            <person name="Junker V."/>
            <person name="Beier H."/>
        </authorList>
    </citation>
    <scope>NUCLEOTIDE SEQUENCE [GENOMIC DNA]</scope>
    <source>
        <strain>cv. Columbia</strain>
        <strain>cv. Landsberg erecta</strain>
    </source>
</reference>
<reference key="2">
    <citation type="submission" date="1999-04" db="EMBL/GenBank/DDBJ databases">
        <title>Structural analysis of Arabidopsis thaliana chromosome 5. XI.</title>
        <authorList>
            <person name="Kaneko T."/>
            <person name="Katoh T."/>
            <person name="Asamizu E."/>
            <person name="Sato S."/>
            <person name="Nakamura Y."/>
            <person name="Kotani H."/>
            <person name="Tabata S."/>
        </authorList>
    </citation>
    <scope>NUCLEOTIDE SEQUENCE [LARGE SCALE GENOMIC DNA]</scope>
    <source>
        <strain>cv. Columbia</strain>
    </source>
</reference>
<reference key="3">
    <citation type="journal article" date="2017" name="Plant J.">
        <title>Araport11: a complete reannotation of the Arabidopsis thaliana reference genome.</title>
        <authorList>
            <person name="Cheng C.Y."/>
            <person name="Krishnakumar V."/>
            <person name="Chan A.P."/>
            <person name="Thibaud-Nissen F."/>
            <person name="Schobel S."/>
            <person name="Town C.D."/>
        </authorList>
    </citation>
    <scope>GENOME REANNOTATION</scope>
    <source>
        <strain>cv. Columbia</strain>
    </source>
</reference>
<reference key="4">
    <citation type="journal article" date="2003" name="Science">
        <title>Empirical analysis of transcriptional activity in the Arabidopsis genome.</title>
        <authorList>
            <person name="Yamada K."/>
            <person name="Lim J."/>
            <person name="Dale J.M."/>
            <person name="Chen H."/>
            <person name="Shinn P."/>
            <person name="Palm C.J."/>
            <person name="Southwick A.M."/>
            <person name="Wu H.C."/>
            <person name="Kim C.J."/>
            <person name="Nguyen M."/>
            <person name="Pham P.K."/>
            <person name="Cheuk R.F."/>
            <person name="Karlin-Newmann G."/>
            <person name="Liu S.X."/>
            <person name="Lam B."/>
            <person name="Sakano H."/>
            <person name="Wu T."/>
            <person name="Yu G."/>
            <person name="Miranda M."/>
            <person name="Quach H.L."/>
            <person name="Tripp M."/>
            <person name="Chang C.H."/>
            <person name="Lee J.M."/>
            <person name="Toriumi M.J."/>
            <person name="Chan M.M."/>
            <person name="Tang C.C."/>
            <person name="Onodera C.S."/>
            <person name="Deng J.M."/>
            <person name="Akiyama K."/>
            <person name="Ansari Y."/>
            <person name="Arakawa T."/>
            <person name="Banh J."/>
            <person name="Banno F."/>
            <person name="Bowser L."/>
            <person name="Brooks S.Y."/>
            <person name="Carninci P."/>
            <person name="Chao Q."/>
            <person name="Choy N."/>
            <person name="Enju A."/>
            <person name="Goldsmith A.D."/>
            <person name="Gurjal M."/>
            <person name="Hansen N.F."/>
            <person name="Hayashizaki Y."/>
            <person name="Johnson-Hopson C."/>
            <person name="Hsuan V.W."/>
            <person name="Iida K."/>
            <person name="Karnes M."/>
            <person name="Khan S."/>
            <person name="Koesema E."/>
            <person name="Ishida J."/>
            <person name="Jiang P.X."/>
            <person name="Jones T."/>
            <person name="Kawai J."/>
            <person name="Kamiya A."/>
            <person name="Meyers C."/>
            <person name="Nakajima M."/>
            <person name="Narusaka M."/>
            <person name="Seki M."/>
            <person name="Sakurai T."/>
            <person name="Satou M."/>
            <person name="Tamse R."/>
            <person name="Vaysberg M."/>
            <person name="Wallender E.K."/>
            <person name="Wong C."/>
            <person name="Yamamura Y."/>
            <person name="Yuan S."/>
            <person name="Shinozaki K."/>
            <person name="Davis R.W."/>
            <person name="Theologis A."/>
            <person name="Ecker J.R."/>
        </authorList>
    </citation>
    <scope>NUCLEOTIDE SEQUENCE [LARGE SCALE MRNA]</scope>
    <source>
        <strain>cv. Columbia</strain>
    </source>
</reference>
<protein>
    <recommendedName>
        <fullName>tRNA-splicing endonuclease subunit Sen2-2</fullName>
        <ecNumber>4.6.1.16</ecNumber>
    </recommendedName>
    <alternativeName>
        <fullName>tRNA-intron endonuclease Sen2-2</fullName>
        <shortName>AtSen2</shortName>
    </alternativeName>
</protein>
<comment type="function">
    <text evidence="1">Constitutes one of the two catalytic subunit of the tRNA-splicing endonuclease complex, a complex responsible for identification and cleavage of the splice sites in pre-tRNA. It cleaves pre-tRNA at the 5'- and 3'-splice sites to release the intron. The products are an intron and two tRNA half-molecules bearing 2',3'-cyclic phosphate and 5'-OH termini. There are no conserved sequences at the splice sites, but the intron is invariably located at the same site in the gene, placing the splice sites an invariant distance from the constant structural features of the tRNA body. Probably carries the active site for 5'-splice site cleavage (By similarity).</text>
</comment>
<comment type="catalytic activity">
    <reaction>
        <text>pretRNA = a 3'-half-tRNA molecule with a 5'-OH end + a 5'-half-tRNA molecule with a 2',3'-cyclic phosphate end + an intron with a 2',3'-cyclic phosphate and a 5'-hydroxyl terminus.</text>
        <dbReference type="EC" id="4.6.1.16"/>
    </reaction>
</comment>
<comment type="subunit">
    <text evidence="1">tRNA splicing endonuclease is a heterotetramer composed of SEN2, SEN15, SEN34/LENG5 and SEN54.</text>
</comment>
<comment type="subcellular location">
    <subcellularLocation>
        <location evidence="1">Nucleus</location>
    </subcellularLocation>
</comment>
<comment type="alternative products">
    <event type="alternative splicing"/>
    <isoform>
        <id>Q9LSS3-1</id>
        <name>1</name>
        <sequence type="displayed"/>
    </isoform>
    <text>A number of isoforms are produced. According to EST sequences.</text>
</comment>
<comment type="similarity">
    <text evidence="3">Belongs to the tRNA-intron endonuclease family.</text>
</comment>